<organism>
    <name type="scientific">Homo sapiens</name>
    <name type="common">Human</name>
    <dbReference type="NCBI Taxonomy" id="9606"/>
    <lineage>
        <taxon>Eukaryota</taxon>
        <taxon>Metazoa</taxon>
        <taxon>Chordata</taxon>
        <taxon>Craniata</taxon>
        <taxon>Vertebrata</taxon>
        <taxon>Euteleostomi</taxon>
        <taxon>Mammalia</taxon>
        <taxon>Eutheria</taxon>
        <taxon>Euarchontoglires</taxon>
        <taxon>Primates</taxon>
        <taxon>Haplorrhini</taxon>
        <taxon>Catarrhini</taxon>
        <taxon>Hominidae</taxon>
        <taxon>Homo</taxon>
    </lineage>
</organism>
<dbReference type="EMBL" id="AF141309">
    <property type="protein sequence ID" value="AAD50080.1"/>
    <property type="molecule type" value="Genomic_DNA"/>
</dbReference>
<dbReference type="EMBL" id="AF141308">
    <property type="protein sequence ID" value="AAD50080.1"/>
    <property type="status" value="JOINED"/>
    <property type="molecule type" value="Genomic_DNA"/>
</dbReference>
<dbReference type="EMBL" id="AF141310">
    <property type="protein sequence ID" value="AAD50081.1"/>
    <property type="status" value="ALT_INIT"/>
    <property type="molecule type" value="mRNA"/>
</dbReference>
<dbReference type="EMBL" id="AK124646">
    <property type="protein sequence ID" value="BAC85916.1"/>
    <property type="molecule type" value="mRNA"/>
</dbReference>
<dbReference type="EMBL" id="AK289490">
    <property type="protein sequence ID" value="BAF82179.1"/>
    <property type="molecule type" value="mRNA"/>
</dbReference>
<dbReference type="EMBL" id="AK290260">
    <property type="protein sequence ID" value="BAF82949.1"/>
    <property type="molecule type" value="mRNA"/>
</dbReference>
<dbReference type="EMBL" id="AL135927">
    <property type="status" value="NOT_ANNOTATED_CDS"/>
    <property type="molecule type" value="Genomic_DNA"/>
</dbReference>
<dbReference type="EMBL" id="CH471121">
    <property type="protein sequence ID" value="EAW52989.1"/>
    <property type="molecule type" value="Genomic_DNA"/>
</dbReference>
<dbReference type="EMBL" id="CH471121">
    <property type="protein sequence ID" value="EAW52990.1"/>
    <property type="molecule type" value="Genomic_DNA"/>
</dbReference>
<dbReference type="EMBL" id="BC033656">
    <property type="status" value="NOT_ANNOTATED_CDS"/>
    <property type="molecule type" value="mRNA"/>
</dbReference>
<dbReference type="EMBL" id="BC050735">
    <property type="protein sequence ID" value="AAH50735.1"/>
    <property type="molecule type" value="mRNA"/>
</dbReference>
<dbReference type="EMBL" id="BC056417">
    <property type="protein sequence ID" value="AAH56417.1"/>
    <property type="molecule type" value="mRNA"/>
</dbReference>
<dbReference type="EMBL" id="BC065031">
    <property type="protein sequence ID" value="AAH65031.1"/>
    <property type="molecule type" value="mRNA"/>
</dbReference>
<dbReference type="EMBL" id="AL080101">
    <property type="protein sequence ID" value="CAH10730.1"/>
    <property type="status" value="ALT_SEQ"/>
    <property type="molecule type" value="mRNA"/>
</dbReference>
<dbReference type="CCDS" id="CCDS30886.1">
    <molecule id="Q6P1K2-1"/>
</dbReference>
<dbReference type="CCDS" id="CCDS55648.1">
    <molecule id="Q6P1K2-2"/>
</dbReference>
<dbReference type="CCDS" id="CCDS55649.1">
    <molecule id="Q6P1K2-6"/>
</dbReference>
<dbReference type="RefSeq" id="NP_001186582.1">
    <molecule id="Q6P1K2-6"/>
    <property type="nucleotide sequence ID" value="NM_001199653.2"/>
</dbReference>
<dbReference type="RefSeq" id="NP_001186583.1">
    <molecule id="Q6P1K2-2"/>
    <property type="nucleotide sequence ID" value="NM_001199654.2"/>
</dbReference>
<dbReference type="RefSeq" id="NP_001186590.1">
    <molecule id="Q6P1K2-5"/>
    <property type="nucleotide sequence ID" value="NM_001199661.1"/>
</dbReference>
<dbReference type="RefSeq" id="NP_001186592.1">
    <molecule id="Q6P1K2-3"/>
    <property type="nucleotide sequence ID" value="NM_001199663.1"/>
</dbReference>
<dbReference type="RefSeq" id="NP_009152.2">
    <molecule id="Q6P1K2-1"/>
    <property type="nucleotide sequence ID" value="NM_007221.4"/>
</dbReference>
<dbReference type="PDB" id="5LSJ">
    <property type="method" value="X-ray"/>
    <property type="resolution" value="3.25 A"/>
    <property type="chains" value="B/E=31-205"/>
</dbReference>
<dbReference type="PDB" id="5LSK">
    <property type="method" value="X-ray"/>
    <property type="resolution" value="3.50 A"/>
    <property type="chains" value="B=31-205"/>
</dbReference>
<dbReference type="PDB" id="8PPR">
    <property type="method" value="EM"/>
    <property type="resolution" value="3.00 A"/>
    <property type="chains" value="P=1-205"/>
</dbReference>
<dbReference type="PDB" id="8Q5H">
    <property type="method" value="EM"/>
    <property type="resolution" value="4.50 A"/>
    <property type="chains" value="B=1-205"/>
</dbReference>
<dbReference type="PDBsum" id="5LSJ"/>
<dbReference type="PDBsum" id="5LSK"/>
<dbReference type="PDBsum" id="8PPR"/>
<dbReference type="PDBsum" id="8Q5H"/>
<dbReference type="EMDB" id="EMD-17814"/>
<dbReference type="EMDB" id="EMD-18179"/>
<dbReference type="EMDB" id="EMD-2549"/>
<dbReference type="SMR" id="Q6P1K2"/>
<dbReference type="BioGRID" id="116405">
    <property type="interactions" value="121"/>
</dbReference>
<dbReference type="BioGRID" id="1529341">
    <property type="interactions" value="18"/>
</dbReference>
<dbReference type="ComplexPortal" id="CPX-5643">
    <property type="entry name" value="Kinetochore MIS12 complex"/>
</dbReference>
<dbReference type="CORUM" id="Q6P1K2"/>
<dbReference type="FunCoup" id="Q6P1K2">
    <property type="interactions" value="1574"/>
</dbReference>
<dbReference type="IntAct" id="Q6P1K2">
    <property type="interactions" value="76"/>
</dbReference>
<dbReference type="MINT" id="Q6P1K2"/>
<dbReference type="STRING" id="9606.ENSP00000357256"/>
<dbReference type="GlyGen" id="Q6P1K2">
    <property type="glycosylation" value="1 site, 1 O-linked glycan (1 site)"/>
</dbReference>
<dbReference type="iPTMnet" id="Q6P1K2"/>
<dbReference type="PhosphoSitePlus" id="Q6P1K2"/>
<dbReference type="SwissPalm" id="Q6P1K2"/>
<dbReference type="BioMuta" id="PMF1"/>
<dbReference type="DMDM" id="114152119"/>
<dbReference type="jPOST" id="Q6P1K2"/>
<dbReference type="MassIVE" id="Q6P1K2"/>
<dbReference type="PaxDb" id="9606-ENSP00000357259"/>
<dbReference type="PeptideAtlas" id="Q6P1K2"/>
<dbReference type="ProteomicsDB" id="64966"/>
<dbReference type="ProteomicsDB" id="66837">
    <molecule id="Q6P1K2-1"/>
</dbReference>
<dbReference type="ProteomicsDB" id="66838">
    <molecule id="Q6P1K2-2"/>
</dbReference>
<dbReference type="ProteomicsDB" id="66839">
    <molecule id="Q6P1K2-3"/>
</dbReference>
<dbReference type="ProteomicsDB" id="66840">
    <molecule id="Q6P1K2-4"/>
</dbReference>
<dbReference type="ProteomicsDB" id="66841">
    <molecule id="Q6P1K2-5"/>
</dbReference>
<dbReference type="Pumba" id="Q6P1K2"/>
<dbReference type="Antibodypedia" id="4085">
    <property type="antibodies" value="170 antibodies from 27 providers"/>
</dbReference>
<dbReference type="DNASU" id="11243"/>
<dbReference type="Ensembl" id="ENST00000368273.8">
    <molecule id="Q6P1K2-2"/>
    <property type="protein sequence ID" value="ENSP00000357256.4"/>
    <property type="gene ID" value="ENSG00000160783.19"/>
</dbReference>
<dbReference type="Ensembl" id="ENST00000368277.3">
    <molecule id="Q6P1K2-1"/>
    <property type="protein sequence ID" value="ENSP00000357260.3"/>
    <property type="gene ID" value="ENSG00000160783.19"/>
</dbReference>
<dbReference type="Ensembl" id="ENST00000368279.7">
    <molecule id="Q6P1K2-6"/>
    <property type="protein sequence ID" value="ENSP00000357262.3"/>
    <property type="gene ID" value="ENSG00000160783.19"/>
</dbReference>
<dbReference type="GeneID" id="100527963"/>
<dbReference type="GeneID" id="11243"/>
<dbReference type="KEGG" id="hsa:100527963"/>
<dbReference type="KEGG" id="hsa:11243"/>
<dbReference type="MANE-Select" id="ENST00000368277.3">
    <property type="protein sequence ID" value="ENSP00000357260.3"/>
    <property type="RefSeq nucleotide sequence ID" value="NM_007221.4"/>
    <property type="RefSeq protein sequence ID" value="NP_009152.2"/>
</dbReference>
<dbReference type="UCSC" id="uc001fnq.4">
    <molecule id="Q6P1K2-1"/>
    <property type="organism name" value="human"/>
</dbReference>
<dbReference type="AGR" id="HGNC:42953"/>
<dbReference type="AGR" id="HGNC:9112"/>
<dbReference type="CTD" id="100527963"/>
<dbReference type="CTD" id="11243"/>
<dbReference type="DisGeNET" id="100527963"/>
<dbReference type="DisGeNET" id="11243"/>
<dbReference type="GeneCards" id="PMF1"/>
<dbReference type="HGNC" id="HGNC:9112">
    <property type="gene designation" value="PMF1"/>
</dbReference>
<dbReference type="HPA" id="ENSG00000160783">
    <property type="expression patterns" value="Low tissue specificity"/>
</dbReference>
<dbReference type="MIM" id="609176">
    <property type="type" value="gene"/>
</dbReference>
<dbReference type="neXtProt" id="NX_Q6P1K2"/>
<dbReference type="OpenTargets" id="ENSG00000160783"/>
<dbReference type="OpenTargets" id="ENSG00000260238"/>
<dbReference type="PharmGKB" id="PA33438"/>
<dbReference type="VEuPathDB" id="HostDB:ENSG00000160783"/>
<dbReference type="eggNOG" id="ENOG502T3RE">
    <property type="taxonomic scope" value="Eukaryota"/>
</dbReference>
<dbReference type="GeneTree" id="ENSGT00940000162656"/>
<dbReference type="HOGENOM" id="CLU_106985_0_0_1"/>
<dbReference type="InParanoid" id="Q6P1K2"/>
<dbReference type="OMA" id="IHLAHLM"/>
<dbReference type="OrthoDB" id="18453at2759"/>
<dbReference type="PAN-GO" id="Q6P1K2">
    <property type="GO annotations" value="2 GO annotations based on evolutionary models"/>
</dbReference>
<dbReference type="PhylomeDB" id="Q6P1K2"/>
<dbReference type="TreeFam" id="TF333180"/>
<dbReference type="PathwayCommons" id="Q6P1K2"/>
<dbReference type="Reactome" id="R-HSA-141444">
    <property type="pathway name" value="Amplification of signal from unattached kinetochores via a MAD2 inhibitory signal"/>
</dbReference>
<dbReference type="Reactome" id="R-HSA-2467813">
    <property type="pathway name" value="Separation of Sister Chromatids"/>
</dbReference>
<dbReference type="Reactome" id="R-HSA-2500257">
    <property type="pathway name" value="Resolution of Sister Chromatid Cohesion"/>
</dbReference>
<dbReference type="Reactome" id="R-HSA-5663220">
    <property type="pathway name" value="RHO GTPases Activate Formins"/>
</dbReference>
<dbReference type="Reactome" id="R-HSA-68877">
    <property type="pathway name" value="Mitotic Prometaphase"/>
</dbReference>
<dbReference type="Reactome" id="R-HSA-9648025">
    <property type="pathway name" value="EML4 and NUDC in mitotic spindle formation"/>
</dbReference>
<dbReference type="SignaLink" id="Q6P1K2"/>
<dbReference type="SIGNOR" id="Q6P1K2"/>
<dbReference type="BioGRID-ORCS" id="100527963">
    <property type="hits" value="344 hits in 1023 CRISPR screens"/>
</dbReference>
<dbReference type="BioGRID-ORCS" id="11243">
    <property type="hits" value="745 hits in 1117 CRISPR screens"/>
</dbReference>
<dbReference type="ChiTaRS" id="PMF1">
    <property type="organism name" value="human"/>
</dbReference>
<dbReference type="GeneWiki" id="Polyamine-modulated_factor_1"/>
<dbReference type="Pharos" id="Q6P1K2">
    <property type="development level" value="Tbio"/>
</dbReference>
<dbReference type="PRO" id="PR:Q6P1K2"/>
<dbReference type="Proteomes" id="UP000005640">
    <property type="component" value="Chromosome 1"/>
</dbReference>
<dbReference type="RNAct" id="Q6P1K2">
    <property type="molecule type" value="protein"/>
</dbReference>
<dbReference type="Bgee" id="ENSG00000160783">
    <property type="expression patterns" value="Expressed in hindlimb stylopod muscle and 204 other cell types or tissues"/>
</dbReference>
<dbReference type="ExpressionAtlas" id="Q6P1K2">
    <property type="expression patterns" value="baseline and differential"/>
</dbReference>
<dbReference type="GO" id="GO:0005829">
    <property type="term" value="C:cytosol"/>
    <property type="evidence" value="ECO:0000304"/>
    <property type="project" value="Reactome"/>
</dbReference>
<dbReference type="GO" id="GO:0005794">
    <property type="term" value="C:Golgi apparatus"/>
    <property type="evidence" value="ECO:0000314"/>
    <property type="project" value="HPA"/>
</dbReference>
<dbReference type="GO" id="GO:0043231">
    <property type="term" value="C:intracellular membrane-bounded organelle"/>
    <property type="evidence" value="ECO:0000314"/>
    <property type="project" value="HPA"/>
</dbReference>
<dbReference type="GO" id="GO:0000776">
    <property type="term" value="C:kinetochore"/>
    <property type="evidence" value="ECO:0000314"/>
    <property type="project" value="WormBase"/>
</dbReference>
<dbReference type="GO" id="GO:0000444">
    <property type="term" value="C:MIS12/MIND type complex"/>
    <property type="evidence" value="ECO:0000314"/>
    <property type="project" value="UniProtKB"/>
</dbReference>
<dbReference type="GO" id="GO:0005654">
    <property type="term" value="C:nucleoplasm"/>
    <property type="evidence" value="ECO:0000314"/>
    <property type="project" value="HPA"/>
</dbReference>
<dbReference type="GO" id="GO:0005634">
    <property type="term" value="C:nucleus"/>
    <property type="evidence" value="ECO:0000303"/>
    <property type="project" value="ComplexPortal"/>
</dbReference>
<dbReference type="GO" id="GO:0000940">
    <property type="term" value="C:outer kinetochore"/>
    <property type="evidence" value="ECO:0000314"/>
    <property type="project" value="UniProtKB"/>
</dbReference>
<dbReference type="GO" id="GO:0000922">
    <property type="term" value="C:spindle pole"/>
    <property type="evidence" value="ECO:0000303"/>
    <property type="project" value="ComplexPortal"/>
</dbReference>
<dbReference type="GO" id="GO:0005667">
    <property type="term" value="C:transcription regulator complex"/>
    <property type="evidence" value="ECO:0000304"/>
    <property type="project" value="ProtInc"/>
</dbReference>
<dbReference type="GO" id="GO:0043522">
    <property type="term" value="F:leucine zipper domain binding"/>
    <property type="evidence" value="ECO:0000353"/>
    <property type="project" value="UniProtKB"/>
</dbReference>
<dbReference type="GO" id="GO:0003713">
    <property type="term" value="F:transcription coactivator activity"/>
    <property type="evidence" value="ECO:0000315"/>
    <property type="project" value="UniProtKB"/>
</dbReference>
<dbReference type="GO" id="GO:0008608">
    <property type="term" value="P:attachment of spindle microtubules to kinetochore"/>
    <property type="evidence" value="ECO:0000303"/>
    <property type="project" value="ComplexPortal"/>
</dbReference>
<dbReference type="GO" id="GO:0051301">
    <property type="term" value="P:cell division"/>
    <property type="evidence" value="ECO:0007669"/>
    <property type="project" value="UniProtKB-KW"/>
</dbReference>
<dbReference type="GO" id="GO:0007059">
    <property type="term" value="P:chromosome segregation"/>
    <property type="evidence" value="ECO:0000315"/>
    <property type="project" value="UniProtKB"/>
</dbReference>
<dbReference type="GO" id="GO:0006366">
    <property type="term" value="P:transcription by RNA polymerase II"/>
    <property type="evidence" value="ECO:0000304"/>
    <property type="project" value="ProtInc"/>
</dbReference>
<dbReference type="InterPro" id="IPR007128">
    <property type="entry name" value="PMF1/Nnf1"/>
</dbReference>
<dbReference type="PANTHER" id="PTHR15459">
    <property type="entry name" value="POLYAMINE-MODULATED FACTOR 1"/>
    <property type="match status" value="1"/>
</dbReference>
<dbReference type="PANTHER" id="PTHR15459:SF4">
    <property type="entry name" value="POLYAMINE-MODULATED FACTOR 1"/>
    <property type="match status" value="1"/>
</dbReference>
<dbReference type="Pfam" id="PF03980">
    <property type="entry name" value="Nnf1"/>
    <property type="match status" value="1"/>
</dbReference>
<proteinExistence type="evidence at protein level"/>
<protein>
    <recommendedName>
        <fullName>Polyamine-modulated factor 1</fullName>
        <shortName>PMF-1</shortName>
    </recommendedName>
</protein>
<evidence type="ECO:0000255" key="1"/>
<evidence type="ECO:0000256" key="2">
    <source>
        <dbReference type="SAM" id="MobiDB-lite"/>
    </source>
</evidence>
<evidence type="ECO:0000269" key="3">
    <source>
    </source>
</evidence>
<evidence type="ECO:0000269" key="4">
    <source>
    </source>
</evidence>
<evidence type="ECO:0000269" key="5">
    <source>
    </source>
</evidence>
<evidence type="ECO:0000269" key="6">
    <source>
    </source>
</evidence>
<evidence type="ECO:0000269" key="7">
    <source>
    </source>
</evidence>
<evidence type="ECO:0000269" key="8">
    <source>
    </source>
</evidence>
<evidence type="ECO:0000269" key="9">
    <source>
    </source>
</evidence>
<evidence type="ECO:0000269" key="10">
    <source>
    </source>
</evidence>
<evidence type="ECO:0000303" key="11">
    <source>
    </source>
</evidence>
<evidence type="ECO:0000303" key="12">
    <source>
    </source>
</evidence>
<evidence type="ECO:0000303" key="13">
    <source>
    </source>
</evidence>
<evidence type="ECO:0000303" key="14">
    <source>
    </source>
</evidence>
<evidence type="ECO:0000305" key="15"/>
<evidence type="ECO:0000312" key="16">
    <source>
        <dbReference type="EMBL" id="AAD50081.1"/>
    </source>
</evidence>
<evidence type="ECO:0000312" key="17">
    <source>
        <dbReference type="EMBL" id="AAH50735.1"/>
    </source>
</evidence>
<evidence type="ECO:0000312" key="18">
    <source>
        <dbReference type="EMBL" id="AAH56417.1"/>
    </source>
</evidence>
<evidence type="ECO:0000312" key="19">
    <source>
        <dbReference type="EMBL" id="AAH65031.1"/>
    </source>
</evidence>
<evidence type="ECO:0000312" key="20">
    <source>
        <dbReference type="EMBL" id="CAH10730.1"/>
    </source>
</evidence>
<evidence type="ECO:0007829" key="21">
    <source>
        <dbReference type="PDB" id="8PPR"/>
    </source>
</evidence>
<name>PMF1_HUMAN</name>
<keyword id="KW-0002">3D-structure</keyword>
<keyword id="KW-0010">Activator</keyword>
<keyword id="KW-0025">Alternative splicing</keyword>
<keyword id="KW-0131">Cell cycle</keyword>
<keyword id="KW-0132">Cell division</keyword>
<keyword id="KW-0137">Centromere</keyword>
<keyword id="KW-0158">Chromosome</keyword>
<keyword id="KW-0159">Chromosome partition</keyword>
<keyword id="KW-0175">Coiled coil</keyword>
<keyword id="KW-0995">Kinetochore</keyword>
<keyword id="KW-0498">Mitosis</keyword>
<keyword id="KW-0539">Nucleus</keyword>
<keyword id="KW-1267">Proteomics identification</keyword>
<keyword id="KW-1185">Reference proteome</keyword>
<keyword id="KW-0804">Transcription</keyword>
<keyword id="KW-0805">Transcription regulation</keyword>
<comment type="function">
    <text evidence="3 4 8 9">Part of the MIS12 complex which is required for normal chromosome alignment and segregation and kinetochore formation during mitosis. May act as a cotranscription partner of NFE2L2 involved in regulation of polyamine-induced transcription of SSAT.</text>
</comment>
<comment type="subunit">
    <text evidence="4 5 8">Component of the MIS12 complex composed of MIS12, DSN1, NSL1 and PMF1. Interacts with COPS7A. Interacts via its coiled-coil domain with the leucine-zipper domain of NFE2L2. The interaction with NFE2L2 is required for the transcriptional regulation of SSAT.</text>
</comment>
<comment type="interaction">
    <interactant intactId="EBI-713832">
        <id>Q6P1K2</id>
    </interactant>
    <interactant intactId="EBI-745725">
        <id>Q9NWV8</id>
        <label>BABAM1</label>
    </interactant>
    <organismsDiffer>false</organismsDiffer>
    <experiments>3</experiments>
</comment>
<comment type="interaction">
    <interactant intactId="EBI-713832">
        <id>Q6P1K2</id>
    </interactant>
    <interactant intactId="EBI-10988864">
        <id>P46379-2</id>
        <label>BAG6</label>
    </interactant>
    <organismsDiffer>false</organismsDiffer>
    <experiments>3</experiments>
</comment>
<comment type="interaction">
    <interactant intactId="EBI-713832">
        <id>Q6P1K2</id>
    </interactant>
    <interactant intactId="EBI-11975051">
        <id>Q8TD16-2</id>
        <label>BICD2</label>
    </interactant>
    <organismsDiffer>false</organismsDiffer>
    <experiments>4</experiments>
</comment>
<comment type="interaction">
    <interactant intactId="EBI-713832">
        <id>Q6P1K2</id>
    </interactant>
    <interactant intactId="EBI-715104">
        <id>Q9NX09</id>
        <label>DDIT4</label>
    </interactant>
    <organismsDiffer>false</organismsDiffer>
    <experiments>3</experiments>
</comment>
<comment type="interaction">
    <interactant intactId="EBI-713832">
        <id>Q6P1K2</id>
    </interactant>
    <interactant intactId="EBI-743105">
        <id>Q5JVL4</id>
        <label>EFHC1</label>
    </interactant>
    <organismsDiffer>false</organismsDiffer>
    <experiments>3</experiments>
</comment>
<comment type="interaction">
    <interactant intactId="EBI-713832">
        <id>Q6P1K2</id>
    </interactant>
    <interactant intactId="EBI-740282">
        <id>Q9NVF7</id>
        <label>FBXO28</label>
    </interactant>
    <organismsDiffer>false</organismsDiffer>
    <experiments>4</experiments>
</comment>
<comment type="interaction">
    <interactant intactId="EBI-713832">
        <id>Q6P1K2</id>
    </interactant>
    <interactant intactId="EBI-948266">
        <id>O14901</id>
        <label>KLF11</label>
    </interactant>
    <organismsDiffer>false</organismsDiffer>
    <experiments>3</experiments>
</comment>
<comment type="interaction">
    <interactant intactId="EBI-713832">
        <id>Q6P1K2</id>
    </interactant>
    <interactant intactId="EBI-6165891">
        <id>Q14696</id>
        <label>MESD</label>
    </interactant>
    <organismsDiffer>false</organismsDiffer>
    <experiments>3</experiments>
</comment>
<comment type="interaction">
    <interactant intactId="EBI-713832">
        <id>Q6P1K2</id>
    </interactant>
    <interactant intactId="EBI-1001205">
        <id>Q9H081</id>
        <label>MIS12</label>
    </interactant>
    <organismsDiffer>false</organismsDiffer>
    <experiments>31</experiments>
</comment>
<comment type="interaction">
    <interactant intactId="EBI-713832">
        <id>Q6P1K2</id>
    </interactant>
    <interactant intactId="EBI-2007911">
        <id>Q16236</id>
        <label>NFE2L2</label>
    </interactant>
    <organismsDiffer>false</organismsDiffer>
    <experiments>2</experiments>
</comment>
<comment type="interaction">
    <interactant intactId="EBI-713832">
        <id>Q6P1K2</id>
    </interactant>
    <interactant intactId="EBI-2811583">
        <id>Q9BVL2</id>
        <label>NUP58</label>
    </interactant>
    <organismsDiffer>false</organismsDiffer>
    <experiments>3</experiments>
</comment>
<comment type="interaction">
    <interactant intactId="EBI-713832">
        <id>Q6P1K2</id>
    </interactant>
    <interactant intactId="EBI-79084">
        <id>Q92529</id>
        <label>SHC3</label>
    </interactant>
    <organismsDiffer>false</organismsDiffer>
    <experiments>3</experiments>
</comment>
<comment type="interaction">
    <interactant intactId="EBI-713832">
        <id>Q6P1K2</id>
    </interactant>
    <interactant intactId="EBI-5235340">
        <id>Q7Z699</id>
        <label>SPRED1</label>
    </interactant>
    <organismsDiffer>false</organismsDiffer>
    <experiments>3</experiments>
</comment>
<comment type="interaction">
    <interactant intactId="EBI-713832">
        <id>Q6P1K2</id>
    </interactant>
    <interactant intactId="EBI-12018146">
        <id>Q8IYX1</id>
        <label>TBC1D21</label>
    </interactant>
    <organismsDiffer>false</organismsDiffer>
    <experiments>3</experiments>
</comment>
<comment type="interaction">
    <interactant intactId="EBI-713832">
        <id>Q6P1K2</id>
    </interactant>
    <interactant intactId="EBI-21353855">
        <id>Q99598</id>
        <label>TSNAX</label>
    </interactant>
    <organismsDiffer>false</organismsDiffer>
    <experiments>4</experiments>
</comment>
<comment type="interaction">
    <interactant intactId="EBI-713832">
        <id>Q6P1K2</id>
    </interactant>
    <interactant intactId="EBI-739895">
        <id>Q8N6Y0</id>
        <label>USHBP1</label>
    </interactant>
    <organismsDiffer>false</organismsDiffer>
    <experiments>3</experiments>
</comment>
<comment type="interaction">
    <interactant intactId="EBI-12906008">
        <id>Q6P1K2-3</id>
    </interactant>
    <interactant intactId="EBI-744545">
        <id>Q8NEC5</id>
        <label>CATSPER1</label>
    </interactant>
    <organismsDiffer>false</organismsDiffer>
    <experiments>3</experiments>
</comment>
<comment type="interaction">
    <interactant intactId="EBI-12906008">
        <id>Q6P1K2-3</id>
    </interactant>
    <interactant intactId="EBI-466029">
        <id>P42858</id>
        <label>HTT</label>
    </interactant>
    <organismsDiffer>false</organismsDiffer>
    <experiments>3</experiments>
</comment>
<comment type="interaction">
    <interactant intactId="EBI-12906008">
        <id>Q6P1K2-3</id>
    </interactant>
    <interactant intactId="EBI-25929070">
        <id>Q9BZ23-2</id>
        <label>PANK2</label>
    </interactant>
    <organismsDiffer>false</organismsDiffer>
    <experiments>3</experiments>
</comment>
<comment type="interaction">
    <interactant intactId="EBI-12906008">
        <id>Q6P1K2-3</id>
    </interactant>
    <interactant intactId="EBI-5235340">
        <id>Q7Z699</id>
        <label>SPRED1</label>
    </interactant>
    <organismsDiffer>false</organismsDiffer>
    <experiments>3</experiments>
</comment>
<comment type="interaction">
    <interactant intactId="EBI-12906008">
        <id>Q6P1K2-3</id>
    </interactant>
    <interactant intactId="EBI-12018146">
        <id>Q8IYX1</id>
        <label>TBC1D21</label>
    </interactant>
    <organismsDiffer>false</organismsDiffer>
    <experiments>3</experiments>
</comment>
<comment type="subcellular location">
    <subcellularLocation>
        <location evidence="9">Nucleus</location>
    </subcellularLocation>
    <subcellularLocation>
        <location evidence="9">Chromosome</location>
        <location evidence="9">Centromere</location>
        <location evidence="9">Kinetochore</location>
    </subcellularLocation>
    <text>Associated with the kinetochore.</text>
</comment>
<comment type="alternative products">
    <event type="alternative splicing"/>
    <isoform>
        <id>Q6P1K2-1</id>
        <name evidence="3">1</name>
        <sequence type="displayed"/>
    </isoform>
    <isoform>
        <id>Q6P1K2-2</id>
        <name evidence="10">2</name>
        <sequence type="described" ref="VSP_052137"/>
    </isoform>
    <isoform>
        <id>Q6P1K2-3</id>
        <name evidence="7">3</name>
        <sequence type="described" ref="VSP_052139 VSP_052140"/>
    </isoform>
    <isoform>
        <id>Q6P1K2-4</id>
        <name evidence="3">4</name>
        <sequence type="described" ref="VSP_052136"/>
    </isoform>
    <isoform>
        <id>Q6P1K2-5</id>
        <name evidence="10">5</name>
        <sequence type="described" ref="VSP_052138"/>
    </isoform>
    <isoform>
        <id>Q6P1K2-6</id>
        <name>6</name>
        <sequence type="described" ref="VSP_044638"/>
    </isoform>
</comment>
<comment type="tissue specificity">
    <text evidence="3">Highest levels of expression in heart and skeletal muscle, with significant levels expressed in kidney and liver.</text>
</comment>
<comment type="induction">
    <text evidence="3">By polyamine analogs in analog-sensitive H157 cells.</text>
</comment>
<comment type="sequence caution" evidence="15">
    <conflict type="erroneous initiation">
        <sequence resource="EMBL-CDS" id="AAD50081"/>
    </conflict>
    <text>Truncated N-terminus.</text>
</comment>
<comment type="sequence caution" evidence="15">
    <conflict type="erroneous initiation">
        <sequence resource="EMBL-CDS" id="CAH10730"/>
    </conflict>
    <text>Truncated N-terminus.</text>
</comment>
<comment type="sequence caution" evidence="15">
    <conflict type="frameshift">
        <sequence resource="EMBL-CDS" id="CAH10730"/>
    </conflict>
</comment>
<sequence>MAEASSANLGSGCEEKRHEGSSSESVPPGTTISRVKLLDTMVDTFLQKLVAAGSYQRFTDCYKCFYQLQPAMTQQIYDKFIAQLQTSIREEISDIKEEGNLEAVLNALDKIVEEGKVRKEPAWRPSGIPEKDLHSVMAPYFLQQRDTLRRHVQKQEAENQQLADAVLAGRRQVEELQLQVQAQQQAWQALHREQRELVAVLREPE</sequence>
<reference evidence="15 16" key="1">
    <citation type="journal article" date="1999" name="J. Biol. Chem.">
        <title>Cloning and characterization of human polyamine-modulated factor-1, a transcriptional cofactor that regulates the transcription of the spermidine/spermine N(1)-acetyltransferase gene.</title>
        <authorList>
            <person name="Wang Y."/>
            <person name="Devereux W."/>
            <person name="Stewart T.M."/>
            <person name="Casero R.A. Jr."/>
        </authorList>
    </citation>
    <scope>NUCLEOTIDE SEQUENCE [GENOMIC DNA] (ISOFORM 4)</scope>
    <scope>NUCLEOTIDE SEQUENCE [MRNA] OF 4-205 (ISOFORM 1)</scope>
    <scope>FUNCTION</scope>
    <scope>TISSUE SPECIFICITY</scope>
    <scope>INDUCTION</scope>
    <scope>VARIANTS ARG-75 AND ILE-137</scope>
    <source>
        <tissue evidence="16">Lung carcinoma</tissue>
    </source>
</reference>
<reference key="2">
    <citation type="journal article" date="2004" name="Nat. Genet.">
        <title>Complete sequencing and characterization of 21,243 full-length human cDNAs.</title>
        <authorList>
            <person name="Ota T."/>
            <person name="Suzuki Y."/>
            <person name="Nishikawa T."/>
            <person name="Otsuki T."/>
            <person name="Sugiyama T."/>
            <person name="Irie R."/>
            <person name="Wakamatsu A."/>
            <person name="Hayashi K."/>
            <person name="Sato H."/>
            <person name="Nagai K."/>
            <person name="Kimura K."/>
            <person name="Makita H."/>
            <person name="Sekine M."/>
            <person name="Obayashi M."/>
            <person name="Nishi T."/>
            <person name="Shibahara T."/>
            <person name="Tanaka T."/>
            <person name="Ishii S."/>
            <person name="Yamamoto J."/>
            <person name="Saito K."/>
            <person name="Kawai Y."/>
            <person name="Isono Y."/>
            <person name="Nakamura Y."/>
            <person name="Nagahari K."/>
            <person name="Murakami K."/>
            <person name="Yasuda T."/>
            <person name="Iwayanagi T."/>
            <person name="Wagatsuma M."/>
            <person name="Shiratori A."/>
            <person name="Sudo H."/>
            <person name="Hosoiri T."/>
            <person name="Kaku Y."/>
            <person name="Kodaira H."/>
            <person name="Kondo H."/>
            <person name="Sugawara M."/>
            <person name="Takahashi M."/>
            <person name="Kanda K."/>
            <person name="Yokoi T."/>
            <person name="Furuya T."/>
            <person name="Kikkawa E."/>
            <person name="Omura Y."/>
            <person name="Abe K."/>
            <person name="Kamihara K."/>
            <person name="Katsuta N."/>
            <person name="Sato K."/>
            <person name="Tanikawa M."/>
            <person name="Yamazaki M."/>
            <person name="Ninomiya K."/>
            <person name="Ishibashi T."/>
            <person name="Yamashita H."/>
            <person name="Murakawa K."/>
            <person name="Fujimori K."/>
            <person name="Tanai H."/>
            <person name="Kimata M."/>
            <person name="Watanabe M."/>
            <person name="Hiraoka S."/>
            <person name="Chiba Y."/>
            <person name="Ishida S."/>
            <person name="Ono Y."/>
            <person name="Takiguchi S."/>
            <person name="Watanabe S."/>
            <person name="Yosida M."/>
            <person name="Hotuta T."/>
            <person name="Kusano J."/>
            <person name="Kanehori K."/>
            <person name="Takahashi-Fujii A."/>
            <person name="Hara H."/>
            <person name="Tanase T.-O."/>
            <person name="Nomura Y."/>
            <person name="Togiya S."/>
            <person name="Komai F."/>
            <person name="Hara R."/>
            <person name="Takeuchi K."/>
            <person name="Arita M."/>
            <person name="Imose N."/>
            <person name="Musashino K."/>
            <person name="Yuuki H."/>
            <person name="Oshima A."/>
            <person name="Sasaki N."/>
            <person name="Aotsuka S."/>
            <person name="Yoshikawa Y."/>
            <person name="Matsunawa H."/>
            <person name="Ichihara T."/>
            <person name="Shiohata N."/>
            <person name="Sano S."/>
            <person name="Moriya S."/>
            <person name="Momiyama H."/>
            <person name="Satoh N."/>
            <person name="Takami S."/>
            <person name="Terashima Y."/>
            <person name="Suzuki O."/>
            <person name="Nakagawa S."/>
            <person name="Senoh A."/>
            <person name="Mizoguchi H."/>
            <person name="Goto Y."/>
            <person name="Shimizu F."/>
            <person name="Wakebe H."/>
            <person name="Hishigaki H."/>
            <person name="Watanabe T."/>
            <person name="Sugiyama A."/>
            <person name="Takemoto M."/>
            <person name="Kawakami B."/>
            <person name="Yamazaki M."/>
            <person name="Watanabe K."/>
            <person name="Kumagai A."/>
            <person name="Itakura S."/>
            <person name="Fukuzumi Y."/>
            <person name="Fujimori Y."/>
            <person name="Komiyama M."/>
            <person name="Tashiro H."/>
            <person name="Tanigami A."/>
            <person name="Fujiwara T."/>
            <person name="Ono T."/>
            <person name="Yamada K."/>
            <person name="Fujii Y."/>
            <person name="Ozaki K."/>
            <person name="Hirao M."/>
            <person name="Ohmori Y."/>
            <person name="Kawabata A."/>
            <person name="Hikiji T."/>
            <person name="Kobatake N."/>
            <person name="Inagaki H."/>
            <person name="Ikema Y."/>
            <person name="Okamoto S."/>
            <person name="Okitani R."/>
            <person name="Kawakami T."/>
            <person name="Noguchi S."/>
            <person name="Itoh T."/>
            <person name="Shigeta K."/>
            <person name="Senba T."/>
            <person name="Matsumura K."/>
            <person name="Nakajima Y."/>
            <person name="Mizuno T."/>
            <person name="Morinaga M."/>
            <person name="Sasaki M."/>
            <person name="Togashi T."/>
            <person name="Oyama M."/>
            <person name="Hata H."/>
            <person name="Watanabe M."/>
            <person name="Komatsu T."/>
            <person name="Mizushima-Sugano J."/>
            <person name="Satoh T."/>
            <person name="Shirai Y."/>
            <person name="Takahashi Y."/>
            <person name="Nakagawa K."/>
            <person name="Okumura K."/>
            <person name="Nagase T."/>
            <person name="Nomura N."/>
            <person name="Kikuchi H."/>
            <person name="Masuho Y."/>
            <person name="Yamashita R."/>
            <person name="Nakai K."/>
            <person name="Yada T."/>
            <person name="Nakamura Y."/>
            <person name="Ohara O."/>
            <person name="Isogai T."/>
            <person name="Sugano S."/>
        </authorList>
    </citation>
    <scope>NUCLEOTIDE SEQUENCE [LARGE SCALE MRNA] (ISOFORMS 1 AND 6)</scope>
    <scope>VARIANT ARG-75</scope>
    <source>
        <tissue>Cerebellum</tissue>
        <tissue>Colon</tissue>
    </source>
</reference>
<reference evidence="15" key="3">
    <citation type="journal article" date="2006" name="Nature">
        <title>The DNA sequence and biological annotation of human chromosome 1.</title>
        <authorList>
            <person name="Gregory S.G."/>
            <person name="Barlow K.F."/>
            <person name="McLay K.E."/>
            <person name="Kaul R."/>
            <person name="Swarbreck D."/>
            <person name="Dunham A."/>
            <person name="Scott C.E."/>
            <person name="Howe K.L."/>
            <person name="Woodfine K."/>
            <person name="Spencer C.C.A."/>
            <person name="Jones M.C."/>
            <person name="Gillson C."/>
            <person name="Searle S."/>
            <person name="Zhou Y."/>
            <person name="Kokocinski F."/>
            <person name="McDonald L."/>
            <person name="Evans R."/>
            <person name="Phillips K."/>
            <person name="Atkinson A."/>
            <person name="Cooper R."/>
            <person name="Jones C."/>
            <person name="Hall R.E."/>
            <person name="Andrews T.D."/>
            <person name="Lloyd C."/>
            <person name="Ainscough R."/>
            <person name="Almeida J.P."/>
            <person name="Ambrose K.D."/>
            <person name="Anderson F."/>
            <person name="Andrew R.W."/>
            <person name="Ashwell R.I.S."/>
            <person name="Aubin K."/>
            <person name="Babbage A.K."/>
            <person name="Bagguley C.L."/>
            <person name="Bailey J."/>
            <person name="Beasley H."/>
            <person name="Bethel G."/>
            <person name="Bird C.P."/>
            <person name="Bray-Allen S."/>
            <person name="Brown J.Y."/>
            <person name="Brown A.J."/>
            <person name="Buckley D."/>
            <person name="Burton J."/>
            <person name="Bye J."/>
            <person name="Carder C."/>
            <person name="Chapman J.C."/>
            <person name="Clark S.Y."/>
            <person name="Clarke G."/>
            <person name="Clee C."/>
            <person name="Cobley V."/>
            <person name="Collier R.E."/>
            <person name="Corby N."/>
            <person name="Coville G.J."/>
            <person name="Davies J."/>
            <person name="Deadman R."/>
            <person name="Dunn M."/>
            <person name="Earthrowl M."/>
            <person name="Ellington A.G."/>
            <person name="Errington H."/>
            <person name="Frankish A."/>
            <person name="Frankland J."/>
            <person name="French L."/>
            <person name="Garner P."/>
            <person name="Garnett J."/>
            <person name="Gay L."/>
            <person name="Ghori M.R.J."/>
            <person name="Gibson R."/>
            <person name="Gilby L.M."/>
            <person name="Gillett W."/>
            <person name="Glithero R.J."/>
            <person name="Grafham D.V."/>
            <person name="Griffiths C."/>
            <person name="Griffiths-Jones S."/>
            <person name="Grocock R."/>
            <person name="Hammond S."/>
            <person name="Harrison E.S.I."/>
            <person name="Hart E."/>
            <person name="Haugen E."/>
            <person name="Heath P.D."/>
            <person name="Holmes S."/>
            <person name="Holt K."/>
            <person name="Howden P.J."/>
            <person name="Hunt A.R."/>
            <person name="Hunt S.E."/>
            <person name="Hunter G."/>
            <person name="Isherwood J."/>
            <person name="James R."/>
            <person name="Johnson C."/>
            <person name="Johnson D."/>
            <person name="Joy A."/>
            <person name="Kay M."/>
            <person name="Kershaw J.K."/>
            <person name="Kibukawa M."/>
            <person name="Kimberley A.M."/>
            <person name="King A."/>
            <person name="Knights A.J."/>
            <person name="Lad H."/>
            <person name="Laird G."/>
            <person name="Lawlor S."/>
            <person name="Leongamornlert D.A."/>
            <person name="Lloyd D.M."/>
            <person name="Loveland J."/>
            <person name="Lovell J."/>
            <person name="Lush M.J."/>
            <person name="Lyne R."/>
            <person name="Martin S."/>
            <person name="Mashreghi-Mohammadi M."/>
            <person name="Matthews L."/>
            <person name="Matthews N.S.W."/>
            <person name="McLaren S."/>
            <person name="Milne S."/>
            <person name="Mistry S."/>
            <person name="Moore M.J.F."/>
            <person name="Nickerson T."/>
            <person name="O'Dell C.N."/>
            <person name="Oliver K."/>
            <person name="Palmeiri A."/>
            <person name="Palmer S.A."/>
            <person name="Parker A."/>
            <person name="Patel D."/>
            <person name="Pearce A.V."/>
            <person name="Peck A.I."/>
            <person name="Pelan S."/>
            <person name="Phelps K."/>
            <person name="Phillimore B.J."/>
            <person name="Plumb R."/>
            <person name="Rajan J."/>
            <person name="Raymond C."/>
            <person name="Rouse G."/>
            <person name="Saenphimmachak C."/>
            <person name="Sehra H.K."/>
            <person name="Sheridan E."/>
            <person name="Shownkeen R."/>
            <person name="Sims S."/>
            <person name="Skuce C.D."/>
            <person name="Smith M."/>
            <person name="Steward C."/>
            <person name="Subramanian S."/>
            <person name="Sycamore N."/>
            <person name="Tracey A."/>
            <person name="Tromans A."/>
            <person name="Van Helmond Z."/>
            <person name="Wall M."/>
            <person name="Wallis J.M."/>
            <person name="White S."/>
            <person name="Whitehead S.L."/>
            <person name="Wilkinson J.E."/>
            <person name="Willey D.L."/>
            <person name="Williams H."/>
            <person name="Wilming L."/>
            <person name="Wray P.W."/>
            <person name="Wu Z."/>
            <person name="Coulson A."/>
            <person name="Vaudin M."/>
            <person name="Sulston J.E."/>
            <person name="Durbin R.M."/>
            <person name="Hubbard T."/>
            <person name="Wooster R."/>
            <person name="Dunham I."/>
            <person name="Carter N.P."/>
            <person name="McVean G."/>
            <person name="Ross M.T."/>
            <person name="Harrow J."/>
            <person name="Olson M.V."/>
            <person name="Beck S."/>
            <person name="Rogers J."/>
            <person name="Bentley D.R."/>
        </authorList>
    </citation>
    <scope>NUCLEOTIDE SEQUENCE [LARGE SCALE GENOMIC DNA]</scope>
</reference>
<reference evidence="15 20" key="4">
    <citation type="submission" date="2005-09" db="EMBL/GenBank/DDBJ databases">
        <authorList>
            <person name="Mural R.J."/>
            <person name="Istrail S."/>
            <person name="Sutton G.G."/>
            <person name="Florea L."/>
            <person name="Halpern A.L."/>
            <person name="Mobarry C.M."/>
            <person name="Lippert R."/>
            <person name="Walenz B."/>
            <person name="Shatkay H."/>
            <person name="Dew I."/>
            <person name="Miller J.R."/>
            <person name="Flanigan M.J."/>
            <person name="Edwards N.J."/>
            <person name="Bolanos R."/>
            <person name="Fasulo D."/>
            <person name="Halldorsson B.V."/>
            <person name="Hannenhalli S."/>
            <person name="Turner R."/>
            <person name="Yooseph S."/>
            <person name="Lu F."/>
            <person name="Nusskern D.R."/>
            <person name="Shue B.C."/>
            <person name="Zheng X.H."/>
            <person name="Zhong F."/>
            <person name="Delcher A.L."/>
            <person name="Huson D.H."/>
            <person name="Kravitz S.A."/>
            <person name="Mouchard L."/>
            <person name="Reinert K."/>
            <person name="Remington K.A."/>
            <person name="Clark A.G."/>
            <person name="Waterman M.S."/>
            <person name="Eichler E.E."/>
            <person name="Adams M.D."/>
            <person name="Hunkapiller M.W."/>
            <person name="Myers E.W."/>
            <person name="Venter J.C."/>
        </authorList>
    </citation>
    <scope>NUCLEOTIDE SEQUENCE [LARGE SCALE GENOMIC DNA]</scope>
</reference>
<reference evidence="15 19" key="5">
    <citation type="journal article" date="2004" name="Genome Res.">
        <title>The status, quality, and expansion of the NIH full-length cDNA project: the Mammalian Gene Collection (MGC).</title>
        <authorList>
            <consortium name="The MGC Project Team"/>
        </authorList>
    </citation>
    <scope>NUCLEOTIDE SEQUENCE [LARGE SCALE MRNA] (ISOFORMS 1 AND 3)</scope>
    <scope>VARIANTS ARG-75 AND ILE-137</scope>
    <source>
        <tissue evidence="18">Colon</tissue>
        <tissue evidence="19">Skin</tissue>
        <tissue evidence="17">Testis</tissue>
        <tissue>Uterus</tissue>
    </source>
</reference>
<reference key="6">
    <citation type="journal article" date="2007" name="BMC Genomics">
        <title>The full-ORF clone resource of the German cDNA consortium.</title>
        <authorList>
            <person name="Bechtel S."/>
            <person name="Rosenfelder H."/>
            <person name="Duda A."/>
            <person name="Schmidt C.P."/>
            <person name="Ernst U."/>
            <person name="Wellenreuther R."/>
            <person name="Mehrle A."/>
            <person name="Schuster C."/>
            <person name="Bahr A."/>
            <person name="Bloecker H."/>
            <person name="Heubner D."/>
            <person name="Hoerlein A."/>
            <person name="Michel G."/>
            <person name="Wedler H."/>
            <person name="Koehrer K."/>
            <person name="Ottenwaelder B."/>
            <person name="Poustka A."/>
            <person name="Wiemann S."/>
            <person name="Schupp I."/>
        </authorList>
    </citation>
    <scope>NUCLEOTIDE SEQUENCE [LARGE SCALE MRNA] OF 2-205 (ISOFORM 1)</scope>
    <source>
        <tissue>Brain</tissue>
    </source>
</reference>
<reference evidence="15" key="7">
    <citation type="journal article" date="2001" name="Biochem. J.">
        <title>Characterization of the interaction between the transcription factors human polyamine modulated factor (PMF-1) and NF-E2-related factor 2 (Nrf-2) in the transcriptional regulation of the spermidine/spermine N1-acetyltransferase (SSAT) gene.</title>
        <authorList>
            <person name="Wang Y."/>
            <person name="Devereux W."/>
            <person name="Stewart T.M."/>
            <person name="Casero R.A. Jr."/>
        </authorList>
    </citation>
    <scope>FUNCTION</scope>
    <scope>INTERACTION WITH NFE2L2</scope>
</reference>
<reference evidence="15" key="8">
    <citation type="journal article" date="2002" name="Biochem. J.">
        <title>Polyamine-modulated factor 1 binds to the human homologue of the 7a subunit of the Arabidopsis COP9 signalosome: implications in gene expression.</title>
        <authorList>
            <person name="Wang Y."/>
            <person name="Devereux W."/>
            <person name="Stewart T.M."/>
            <person name="Casero R.A. Jr."/>
        </authorList>
    </citation>
    <scope>INTERACTION WITH COPS7A</scope>
</reference>
<reference evidence="15" key="9">
    <citation type="journal article" date="2004" name="Nat. Cell Biol.">
        <title>A conserved Mis12 centromere complex is linked to heterochromatic HP1 and outer kinetochore protein Zwint-1.</title>
        <authorList>
            <person name="Obuse C."/>
            <person name="Iwasaki O."/>
            <person name="Kiyomitsu T."/>
            <person name="Goshima G."/>
            <person name="Toyoda Y."/>
            <person name="Yanagida M."/>
        </authorList>
    </citation>
    <scope>FUNCTION</scope>
    <scope>INTERACTION WITH DSN1 AND MIS12</scope>
    <scope>IDENTIFICATION BY MASS SPECTROMETRY</scope>
</reference>
<reference key="10">
    <citation type="journal article" date="2006" name="J. Cell Biol.">
        <title>The human Mis12 complex is required for kinetochore assembly and proper chromosome segregation.</title>
        <authorList>
            <person name="Kline S.L."/>
            <person name="Cheeseman I.M."/>
            <person name="Hori T."/>
            <person name="Fukagawa T."/>
            <person name="Desai A."/>
        </authorList>
    </citation>
    <scope>FUNCTION</scope>
    <scope>COMPONENT OF MIS12 COMPLEX</scope>
    <scope>SUBCELLULAR LOCATION</scope>
</reference>
<accession>Q6P1K2</accession>
<accession>A8K0C5</accession>
<accession>Q5TCJ8</accession>
<accession>Q5TCJ9</accession>
<accession>Q5TCK0</accession>
<accession>Q5TCK1</accession>
<accession>Q5TCK3</accession>
<accession>Q69YZ9</accession>
<accession>Q6PHR4</accession>
<accession>Q6ZVE6</accession>
<accession>Q86VJ6</accession>
<accession>Q8N4T6</accession>
<accession>Q9UBQ3</accession>
<feature type="chain" id="PRO_0000248237" description="Polyamine-modulated factor 1">
    <location>
        <begin position="1"/>
        <end position="205"/>
    </location>
</feature>
<feature type="region of interest" description="Disordered" evidence="2">
    <location>
        <begin position="1"/>
        <end position="30"/>
    </location>
</feature>
<feature type="coiled-coil region" evidence="1">
    <location>
        <begin position="141"/>
        <end position="193"/>
    </location>
</feature>
<feature type="splice variant" id="VSP_052136" description="In isoform 4." evidence="11">
    <location>
        <begin position="1"/>
        <end position="40"/>
    </location>
</feature>
<feature type="splice variant" id="VSP_052137" description="In isoform 2." evidence="14">
    <original>YQRFTDCYKCFYQLQPAMTQQIYDKFIAQLQTSIR</original>
    <variation>SPLLHWDGSAGPRLPSGGQSVKQAFSWAACRLPQGRK</variation>
    <location>
        <begin position="55"/>
        <end position="89"/>
    </location>
</feature>
<feature type="splice variant" id="VSP_052138" description="In isoform 5." evidence="14">
    <original>WRPSGIPEKDLHSVMAPYFLQQRDTLRRHVQKQEAENQQLADAVLAGRRQVEELQLQVQAQQQAWQALHREQRELVAVLREPE</original>
    <variation>CNGTPCGAMCRNRRPRTSSWQMPSWQGGGRWRSCSYRSRPSSRPGRCEAQRCRVQQRCSLCVQAGGQRGSEETQALPVSMAGSPSPLPGSPGAQEGGV</variation>
    <location>
        <begin position="123"/>
        <end position="205"/>
    </location>
</feature>
<feature type="splice variant" id="VSP_044638" description="In isoform 6." evidence="12">
    <original>WRPSGIPEKDLHSVMAPYFLQQRDTLRRHVQKQEAENQQLADAVLAGRRQVEELQLQVQAQQQAWQALHREQRELVAVLREPE</original>
    <variation>CNGTPCGAMCRNRRPRTSSWQMPSWQGGGRWRSCSYRSRPSSRPGRLYTENRGSWLLC</variation>
    <location>
        <begin position="123"/>
        <end position="205"/>
    </location>
</feature>
<feature type="splice variant" id="VSP_052139" description="In isoform 3." evidence="13">
    <original>RPSGIPEKDLHSVMAPYFLQQRDTLRRHVQKQEAENQQLADAVLAGRRQVEE</original>
    <variation>CEAQRCRVQQRCSLCVQAGGQRGSEETQALPVSMAGSPSPLPGSPGAQEGGV</variation>
    <location>
        <begin position="124"/>
        <end position="175"/>
    </location>
</feature>
<feature type="splice variant" id="VSP_052140" description="In isoform 3." evidence="13">
    <location>
        <begin position="176"/>
        <end position="205"/>
    </location>
</feature>
<feature type="sequence variant" id="VAR_034147" description="In dbSNP:rs1052053." evidence="3 6 7">
    <original>Q</original>
    <variation>R</variation>
    <location>
        <position position="75"/>
    </location>
</feature>
<feature type="sequence variant" id="VAR_034148" description="In dbSNP:rs1052067." evidence="3 7">
    <original>M</original>
    <variation>I</variation>
    <location>
        <position position="137"/>
    </location>
</feature>
<feature type="sequence conflict" description="In Ref. 6; CAH10730." evidence="15" ref="6">
    <original>A</original>
    <variation>G</variation>
    <location>
        <position position="2"/>
    </location>
</feature>
<feature type="helix" evidence="21">
    <location>
        <begin position="34"/>
        <end position="52"/>
    </location>
</feature>
<feature type="helix" evidence="21">
    <location>
        <begin position="55"/>
        <end position="61"/>
    </location>
</feature>
<feature type="helix" evidence="21">
    <location>
        <begin position="63"/>
        <end position="66"/>
    </location>
</feature>
<feature type="helix" evidence="21">
    <location>
        <begin position="70"/>
        <end position="98"/>
    </location>
</feature>
<feature type="helix" evidence="21">
    <location>
        <begin position="101"/>
        <end position="114"/>
    </location>
</feature>
<feature type="helix" evidence="21">
    <location>
        <begin position="129"/>
        <end position="188"/>
    </location>
</feature>
<feature type="helix" evidence="21">
    <location>
        <begin position="190"/>
        <end position="200"/>
    </location>
</feature>
<gene>
    <name evidence="19" type="primary">PMF1</name>
</gene>